<reference evidence="12" key="1">
    <citation type="journal article" date="2011" name="Aquat. Toxicol.">
        <title>Identification, characterization, and ontogenic study of a catechol O-methyltransferase from zebrafish.</title>
        <authorList>
            <person name="Alazizi A."/>
            <person name="Liu M.Y."/>
            <person name="Williams F.E."/>
            <person name="Kurogi K."/>
            <person name="Sakakibara Y."/>
            <person name="Suiko M."/>
            <person name="Liu M.C."/>
        </authorList>
    </citation>
    <scope>NUCLEOTIDE SEQUENCE [MRNA] (ISOFORM 1)</scope>
    <scope>FUNCTION</scope>
    <scope>CATALYTIC ACTIVITY</scope>
    <scope>BIOPHYSICOCHEMICAL PROPERTIES</scope>
    <scope>TISSUE SPECIFICITY</scope>
    <scope>DEVELOPMENTAL STAGE</scope>
</reference>
<reference evidence="13" key="2">
    <citation type="journal article" date="2013" name="Nature">
        <title>The zebrafish reference genome sequence and its relationship to the human genome.</title>
        <authorList>
            <person name="Howe K."/>
            <person name="Clark M.D."/>
            <person name="Torroja C.F."/>
            <person name="Torrance J."/>
            <person name="Berthelot C."/>
            <person name="Muffato M."/>
            <person name="Collins J.E."/>
            <person name="Humphray S."/>
            <person name="McLaren K."/>
            <person name="Matthews L."/>
            <person name="McLaren S."/>
            <person name="Sealy I."/>
            <person name="Caccamo M."/>
            <person name="Churcher C."/>
            <person name="Scott C."/>
            <person name="Barrett J.C."/>
            <person name="Koch R."/>
            <person name="Rauch G.J."/>
            <person name="White S."/>
            <person name="Chow W."/>
            <person name="Kilian B."/>
            <person name="Quintais L.T."/>
            <person name="Guerra-Assuncao J.A."/>
            <person name="Zhou Y."/>
            <person name="Gu Y."/>
            <person name="Yen J."/>
            <person name="Vogel J.H."/>
            <person name="Eyre T."/>
            <person name="Redmond S."/>
            <person name="Banerjee R."/>
            <person name="Chi J."/>
            <person name="Fu B."/>
            <person name="Langley E."/>
            <person name="Maguire S.F."/>
            <person name="Laird G.K."/>
            <person name="Lloyd D."/>
            <person name="Kenyon E."/>
            <person name="Donaldson S."/>
            <person name="Sehra H."/>
            <person name="Almeida-King J."/>
            <person name="Loveland J."/>
            <person name="Trevanion S."/>
            <person name="Jones M."/>
            <person name="Quail M."/>
            <person name="Willey D."/>
            <person name="Hunt A."/>
            <person name="Burton J."/>
            <person name="Sims S."/>
            <person name="McLay K."/>
            <person name="Plumb B."/>
            <person name="Davis J."/>
            <person name="Clee C."/>
            <person name="Oliver K."/>
            <person name="Clark R."/>
            <person name="Riddle C."/>
            <person name="Elliot D."/>
            <person name="Threadgold G."/>
            <person name="Harden G."/>
            <person name="Ware D."/>
            <person name="Begum S."/>
            <person name="Mortimore B."/>
            <person name="Kerry G."/>
            <person name="Heath P."/>
            <person name="Phillimore B."/>
            <person name="Tracey A."/>
            <person name="Corby N."/>
            <person name="Dunn M."/>
            <person name="Johnson C."/>
            <person name="Wood J."/>
            <person name="Clark S."/>
            <person name="Pelan S."/>
            <person name="Griffiths G."/>
            <person name="Smith M."/>
            <person name="Glithero R."/>
            <person name="Howden P."/>
            <person name="Barker N."/>
            <person name="Lloyd C."/>
            <person name="Stevens C."/>
            <person name="Harley J."/>
            <person name="Holt K."/>
            <person name="Panagiotidis G."/>
            <person name="Lovell J."/>
            <person name="Beasley H."/>
            <person name="Henderson C."/>
            <person name="Gordon D."/>
            <person name="Auger K."/>
            <person name="Wright D."/>
            <person name="Collins J."/>
            <person name="Raisen C."/>
            <person name="Dyer L."/>
            <person name="Leung K."/>
            <person name="Robertson L."/>
            <person name="Ambridge K."/>
            <person name="Leongamornlert D."/>
            <person name="McGuire S."/>
            <person name="Gilderthorp R."/>
            <person name="Griffiths C."/>
            <person name="Manthravadi D."/>
            <person name="Nichol S."/>
            <person name="Barker G."/>
            <person name="Whitehead S."/>
            <person name="Kay M."/>
            <person name="Brown J."/>
            <person name="Murnane C."/>
            <person name="Gray E."/>
            <person name="Humphries M."/>
            <person name="Sycamore N."/>
            <person name="Barker D."/>
            <person name="Saunders D."/>
            <person name="Wallis J."/>
            <person name="Babbage A."/>
            <person name="Hammond S."/>
            <person name="Mashreghi-Mohammadi M."/>
            <person name="Barr L."/>
            <person name="Martin S."/>
            <person name="Wray P."/>
            <person name="Ellington A."/>
            <person name="Matthews N."/>
            <person name="Ellwood M."/>
            <person name="Woodmansey R."/>
            <person name="Clark G."/>
            <person name="Cooper J."/>
            <person name="Tromans A."/>
            <person name="Grafham D."/>
            <person name="Skuce C."/>
            <person name="Pandian R."/>
            <person name="Andrews R."/>
            <person name="Harrison E."/>
            <person name="Kimberley A."/>
            <person name="Garnett J."/>
            <person name="Fosker N."/>
            <person name="Hall R."/>
            <person name="Garner P."/>
            <person name="Kelly D."/>
            <person name="Bird C."/>
            <person name="Palmer S."/>
            <person name="Gehring I."/>
            <person name="Berger A."/>
            <person name="Dooley C.M."/>
            <person name="Ersan-Urun Z."/>
            <person name="Eser C."/>
            <person name="Geiger H."/>
            <person name="Geisler M."/>
            <person name="Karotki L."/>
            <person name="Kirn A."/>
            <person name="Konantz J."/>
            <person name="Konantz M."/>
            <person name="Oberlander M."/>
            <person name="Rudolph-Geiger S."/>
            <person name="Teucke M."/>
            <person name="Lanz C."/>
            <person name="Raddatz G."/>
            <person name="Osoegawa K."/>
            <person name="Zhu B."/>
            <person name="Rapp A."/>
            <person name="Widaa S."/>
            <person name="Langford C."/>
            <person name="Yang F."/>
            <person name="Schuster S.C."/>
            <person name="Carter N.P."/>
            <person name="Harrow J."/>
            <person name="Ning Z."/>
            <person name="Herrero J."/>
            <person name="Searle S.M."/>
            <person name="Enright A."/>
            <person name="Geisler R."/>
            <person name="Plasterk R.H."/>
            <person name="Lee C."/>
            <person name="Westerfield M."/>
            <person name="de Jong P.J."/>
            <person name="Zon L.I."/>
            <person name="Postlethwait J.H."/>
            <person name="Nusslein-Volhard C."/>
            <person name="Hubbard T.J."/>
            <person name="Roest Crollius H."/>
            <person name="Rogers J."/>
            <person name="Stemple D.L."/>
        </authorList>
    </citation>
    <scope>NUCLEOTIDE SEQUENCE [LARGE SCALE GENOMIC DNA]</scope>
    <source>
        <strain>Tuebingen</strain>
    </source>
</reference>
<reference evidence="11" key="3">
    <citation type="submission" date="2005-06" db="EMBL/GenBank/DDBJ databases">
        <authorList>
            <consortium name="NIH - Zebrafish Gene Collection (ZGC) project"/>
        </authorList>
    </citation>
    <scope>NUCLEOTIDE SEQUENCE [LARGE SCALE MRNA] (ISOFORM 2)</scope>
    <source>
        <tissue evidence="11">Larva</tissue>
    </source>
</reference>
<reference evidence="10" key="4">
    <citation type="journal article" date="2017" name="Biochem. Pharmacol.">
        <title>Distribution, properties, and inhibitor sensitivity of zebrafish catechol-O-methyl transferases (COMT).</title>
        <authorList>
            <person name="Semenova S."/>
            <person name="Rozov S."/>
            <person name="Panula P."/>
        </authorList>
    </citation>
    <scope>TISSUE SPECIFICITY</scope>
</reference>
<proteinExistence type="evidence at protein level"/>
<name>COMTA_DANRE</name>
<comment type="function">
    <text evidence="7">Catalyzes the O-methylation, and thereby the inactivation, of catecholamine neurotransmitters and catechol hormones. Shows highest activity towards catecholestrogens and dobutamine. Also has lower activity towards L-DOPA, dopamine and epinephrine. Active towards the xenobiotic compounds methyl-DOPA, carbidopa, isoproterenol, and apomorphine.</text>
</comment>
<comment type="catalytic activity">
    <reaction evidence="7">
        <text>a catechol + S-adenosyl-L-methionine = a guaiacol + S-adenosyl-L-homocysteine + H(+)</text>
        <dbReference type="Rhea" id="RHEA:17877"/>
        <dbReference type="ChEBI" id="CHEBI:15378"/>
        <dbReference type="ChEBI" id="CHEBI:33566"/>
        <dbReference type="ChEBI" id="CHEBI:57856"/>
        <dbReference type="ChEBI" id="CHEBI:59789"/>
        <dbReference type="ChEBI" id="CHEBI:134251"/>
        <dbReference type="EC" id="2.1.1.6"/>
    </reaction>
</comment>
<comment type="cofactor">
    <cofactor evidence="4">
        <name>Mg(2+)</name>
        <dbReference type="ChEBI" id="CHEBI:18420"/>
    </cofactor>
    <text evidence="4">Binds 1 Mg(2+) ion per subunit.</text>
</comment>
<comment type="biophysicochemical properties">
    <phDependence>
        <text evidence="7">Optimum pH is 7.5-10.5. Active from pH 5.5-11.5.</text>
    </phDependence>
</comment>
<comment type="subcellular location">
    <subcellularLocation>
        <location evidence="10">Secreted</location>
    </subcellularLocation>
</comment>
<comment type="alternative products">
    <event type="alternative splicing"/>
    <isoform>
        <id>F4ZGF2-1</id>
        <name>1</name>
        <sequence type="displayed"/>
    </isoform>
    <isoform>
        <id>F4ZGF2-2</id>
        <name>2</name>
        <sequence type="described" ref="VSP_059648 VSP_059649"/>
    </isoform>
</comment>
<comment type="tissue specificity">
    <text evidence="7 8">Widely expressed (PubMed:28844929). Has higher expression in females compared to males (PubMed:21371608). Strongly expressed in liver and diencephalon (PubMed:28844929). Expressed at lower levels in hindbrain, spinal cord, eye, telencephalon, spleen, gut, gill and muscle (PubMed:28844929). Detected in ovary and testis (PubMed:28844929). In eye, detected in all layers of the retina with highest expression in the inner nuclear layer (PubMed:28844929). In gut, expressed in the lamina propria but has little or no expression in gut epithelium (PubMed:28844929). In brain, has strongest expression near the midline of the telencephalon, in the periventricular gray zone of the optic tectum, in the preglomerular nucleus, and near the walls of the diencephalic ventricle (PubMed:28844929).</text>
</comment>
<comment type="developmental stage">
    <text evidence="7">Highly expressed in unfertilized eggs. Has low expression during embryogenesis. Expression then increases after hatching (48 hours post-fertilization), reaching maximum levels at 3 weeks of age.</text>
</comment>
<comment type="similarity">
    <text evidence="6">Belongs to the class I-like SAM-binding methyltransferase superfamily. Cation-dependent O-methyltransferase family.</text>
</comment>
<keyword id="KW-0025">Alternative splicing</keyword>
<keyword id="KW-0128">Catecholamine metabolism</keyword>
<keyword id="KW-0325">Glycoprotein</keyword>
<keyword id="KW-0460">Magnesium</keyword>
<keyword id="KW-0479">Metal-binding</keyword>
<keyword id="KW-0489">Methyltransferase</keyword>
<keyword id="KW-0531">Neurotransmitter degradation</keyword>
<keyword id="KW-1185">Reference proteome</keyword>
<keyword id="KW-0949">S-adenosyl-L-methionine</keyword>
<keyword id="KW-0964">Secreted</keyword>
<keyword id="KW-0732">Signal</keyword>
<keyword id="KW-0808">Transferase</keyword>
<sequence>MLWVVLAVVVVLASVLVLLRQSSGLLALLWHDVVHQRLLNFFTGLSRPQRILKAVQKNATKGNPESVIAAIDHYCRHSEWAMNVGDEKGLILDSVVTEVNPSTALELGTYCGYSTVRIARLLSPGTKLITLEFNPDYAAIARQIIAYAGLQDKVILVEGPSGDLIPKMKQQHGIKSFDFVFLDHWKDRYVPDTKLLEECGLLRKGSVLLADNVICPGTPEYLKYVRNDPRYESRYFKSNLEYTKVEDGLEKSVFLG</sequence>
<organism evidence="13">
    <name type="scientific">Danio rerio</name>
    <name type="common">Zebrafish</name>
    <name type="synonym">Brachydanio rerio</name>
    <dbReference type="NCBI Taxonomy" id="7955"/>
    <lineage>
        <taxon>Eukaryota</taxon>
        <taxon>Metazoa</taxon>
        <taxon>Chordata</taxon>
        <taxon>Craniata</taxon>
        <taxon>Vertebrata</taxon>
        <taxon>Euteleostomi</taxon>
        <taxon>Actinopterygii</taxon>
        <taxon>Neopterygii</taxon>
        <taxon>Teleostei</taxon>
        <taxon>Ostariophysi</taxon>
        <taxon>Cypriniformes</taxon>
        <taxon>Danionidae</taxon>
        <taxon>Danioninae</taxon>
        <taxon>Danio</taxon>
    </lineage>
</organism>
<feature type="signal peptide" evidence="1">
    <location>
        <begin position="1"/>
        <end position="27"/>
    </location>
</feature>
<feature type="chain" id="PRO_0000444753" description="Catechol O-methyltransferase A" evidence="1">
    <location>
        <begin position="28"/>
        <end position="256"/>
    </location>
</feature>
<feature type="binding site" evidence="2">
    <location>
        <position position="84"/>
    </location>
    <ligand>
        <name>S-adenosyl-L-methionine</name>
        <dbReference type="ChEBI" id="CHEBI:59789"/>
    </ligand>
</feature>
<feature type="binding site" evidence="2">
    <location>
        <position position="114"/>
    </location>
    <ligand>
        <name>S-adenosyl-L-methionine</name>
        <dbReference type="ChEBI" id="CHEBI:59789"/>
    </ligand>
</feature>
<feature type="binding site" evidence="2">
    <location>
        <position position="132"/>
    </location>
    <ligand>
        <name>S-adenosyl-L-methionine</name>
        <dbReference type="ChEBI" id="CHEBI:59789"/>
    </ligand>
</feature>
<feature type="binding site" evidence="4">
    <location>
        <position position="183"/>
    </location>
    <ligand>
        <name>Mg(2+)</name>
        <dbReference type="ChEBI" id="CHEBI:18420"/>
    </ligand>
</feature>
<feature type="binding site" evidence="2">
    <location>
        <position position="183"/>
    </location>
    <ligand>
        <name>S-adenosyl-L-methionine</name>
        <dbReference type="ChEBI" id="CHEBI:59789"/>
    </ligand>
</feature>
<feature type="binding site" evidence="3">
    <location>
        <position position="186"/>
    </location>
    <ligand>
        <name>substrate</name>
    </ligand>
</feature>
<feature type="binding site" evidence="4">
    <location>
        <position position="211"/>
    </location>
    <ligand>
        <name>Mg(2+)</name>
        <dbReference type="ChEBI" id="CHEBI:18420"/>
    </ligand>
</feature>
<feature type="binding site" evidence="4">
    <location>
        <position position="212"/>
    </location>
    <ligand>
        <name>Mg(2+)</name>
        <dbReference type="ChEBI" id="CHEBI:18420"/>
    </ligand>
</feature>
<feature type="binding site" evidence="3">
    <location>
        <position position="212"/>
    </location>
    <ligand>
        <name>substrate</name>
    </ligand>
</feature>
<feature type="binding site" evidence="3">
    <location>
        <position position="241"/>
    </location>
    <ligand>
        <name>substrate</name>
    </ligand>
</feature>
<feature type="glycosylation site" description="N-linked (GlcNAc...) asparagine" evidence="5">
    <location>
        <position position="58"/>
    </location>
</feature>
<feature type="splice variant" id="VSP_059648" description="In isoform 2.">
    <original>YAAIARQ</original>
    <variation>RAVVEEI</variation>
    <location>
        <begin position="137"/>
        <end position="143"/>
    </location>
</feature>
<feature type="splice variant" id="VSP_059649" description="In isoform 2.">
    <location>
        <begin position="144"/>
        <end position="256"/>
    </location>
</feature>
<feature type="sequence conflict" description="In Ref. 3; AAH97207." evidence="10" ref="3">
    <original>G</original>
    <variation>D</variation>
    <location>
        <position position="24"/>
    </location>
</feature>
<feature type="sequence conflict" description="In Ref. 3; AAH97207." evidence="10" ref="3">
    <original>N</original>
    <variation>D</variation>
    <location>
        <position position="40"/>
    </location>
</feature>
<evidence type="ECO:0000255" key="1"/>
<evidence type="ECO:0000255" key="2">
    <source>
        <dbReference type="PIRSR" id="PIRSR037177-1"/>
    </source>
</evidence>
<evidence type="ECO:0000255" key="3">
    <source>
        <dbReference type="PIRSR" id="PIRSR037177-2"/>
    </source>
</evidence>
<evidence type="ECO:0000255" key="4">
    <source>
        <dbReference type="PIRSR" id="PIRSR037177-3"/>
    </source>
</evidence>
<evidence type="ECO:0000255" key="5">
    <source>
        <dbReference type="PROSITE-ProRule" id="PRU00498"/>
    </source>
</evidence>
<evidence type="ECO:0000255" key="6">
    <source>
        <dbReference type="PROSITE-ProRule" id="PRU01019"/>
    </source>
</evidence>
<evidence type="ECO:0000269" key="7">
    <source>
    </source>
</evidence>
<evidence type="ECO:0000269" key="8">
    <source>
    </source>
</evidence>
<evidence type="ECO:0000303" key="9">
    <source>
    </source>
</evidence>
<evidence type="ECO:0000305" key="10"/>
<evidence type="ECO:0000312" key="11">
    <source>
        <dbReference type="EMBL" id="AAH97207.1"/>
    </source>
</evidence>
<evidence type="ECO:0000312" key="12">
    <source>
        <dbReference type="EMBL" id="ADM47479.1"/>
    </source>
</evidence>
<evidence type="ECO:0000312" key="13">
    <source>
        <dbReference type="Proteomes" id="UP000000437"/>
    </source>
</evidence>
<accession>F4ZGF2</accession>
<accession>F1QFV7</accession>
<accession>Q4V8T4</accession>
<protein>
    <recommendedName>
        <fullName evidence="9">Catechol O-methyltransferase A</fullName>
        <ecNumber evidence="6 7">2.1.1.6</ecNumber>
    </recommendedName>
</protein>
<dbReference type="EC" id="2.1.1.6" evidence="6 7"/>
<dbReference type="EMBL" id="HM997189">
    <property type="protein sequence ID" value="ADM47479.1"/>
    <property type="molecule type" value="mRNA"/>
</dbReference>
<dbReference type="EMBL" id="CR457452">
    <property type="status" value="NOT_ANNOTATED_CDS"/>
    <property type="molecule type" value="Genomic_DNA"/>
</dbReference>
<dbReference type="EMBL" id="BC097207">
    <property type="protein sequence ID" value="AAH97207.1"/>
    <property type="molecule type" value="mRNA"/>
</dbReference>
<dbReference type="RefSeq" id="NP_001025328.2">
    <molecule id="F4ZGF2-1"/>
    <property type="nucleotide sequence ID" value="NM_001030157.2"/>
</dbReference>
<dbReference type="RefSeq" id="XP_005166768.1">
    <molecule id="F4ZGF2-1"/>
    <property type="nucleotide sequence ID" value="XM_005166711.5"/>
</dbReference>
<dbReference type="SMR" id="F4ZGF2"/>
<dbReference type="FunCoup" id="F4ZGF2">
    <property type="interactions" value="700"/>
</dbReference>
<dbReference type="STRING" id="7955.ENSDARP00000119183"/>
<dbReference type="GlyCosmos" id="F4ZGF2">
    <property type="glycosylation" value="1 site, No reported glycans"/>
</dbReference>
<dbReference type="PaxDb" id="7955-ENSDARP00000119183"/>
<dbReference type="Ensembl" id="ENSDART00000186684">
    <molecule id="F4ZGF2-1"/>
    <property type="protein sequence ID" value="ENSDARP00000156115"/>
    <property type="gene ID" value="ENSDARG00000015337"/>
</dbReference>
<dbReference type="GeneID" id="561372"/>
<dbReference type="KEGG" id="dre:561372"/>
<dbReference type="AGR" id="ZFIN:ZDB-GENE-050913-117"/>
<dbReference type="CTD" id="561372"/>
<dbReference type="ZFIN" id="ZDB-GENE-050913-117">
    <property type="gene designation" value="comta"/>
</dbReference>
<dbReference type="HOGENOM" id="CLU_050461_5_1_1"/>
<dbReference type="InParanoid" id="F4ZGF2"/>
<dbReference type="OMA" id="EMNPQNC"/>
<dbReference type="OrthoDB" id="186626at2759"/>
<dbReference type="Reactome" id="R-DRE-156581">
    <property type="pathway name" value="Methylation"/>
</dbReference>
<dbReference type="Reactome" id="R-DRE-379397">
    <property type="pathway name" value="Enzymatic degradation of dopamine by COMT"/>
</dbReference>
<dbReference type="Reactome" id="R-DRE-379398">
    <property type="pathway name" value="Enzymatic degradation of Dopamine by monoamine oxidase"/>
</dbReference>
<dbReference type="PRO" id="PR:F4ZGF2"/>
<dbReference type="Proteomes" id="UP000000437">
    <property type="component" value="Chromosome 8"/>
</dbReference>
<dbReference type="Bgee" id="ENSDARG00000015337">
    <property type="expression patterns" value="Expressed in liver and 29 other cell types or tissues"/>
</dbReference>
<dbReference type="ExpressionAtlas" id="F4ZGF2">
    <property type="expression patterns" value="baseline and differential"/>
</dbReference>
<dbReference type="GO" id="GO:0005576">
    <property type="term" value="C:extracellular region"/>
    <property type="evidence" value="ECO:0007669"/>
    <property type="project" value="UniProtKB-SubCell"/>
</dbReference>
<dbReference type="GO" id="GO:0016206">
    <property type="term" value="F:catechol O-methyltransferase activity"/>
    <property type="evidence" value="ECO:0000314"/>
    <property type="project" value="ZFIN"/>
</dbReference>
<dbReference type="GO" id="GO:0000287">
    <property type="term" value="F:magnesium ion binding"/>
    <property type="evidence" value="ECO:0007669"/>
    <property type="project" value="InterPro"/>
</dbReference>
<dbReference type="GO" id="GO:0042424">
    <property type="term" value="P:catecholamine catabolic process"/>
    <property type="evidence" value="ECO:0000318"/>
    <property type="project" value="GO_Central"/>
</dbReference>
<dbReference type="GO" id="GO:0032502">
    <property type="term" value="P:developmental process"/>
    <property type="evidence" value="ECO:0000318"/>
    <property type="project" value="GO_Central"/>
</dbReference>
<dbReference type="GO" id="GO:0042417">
    <property type="term" value="P:dopamine metabolic process"/>
    <property type="evidence" value="ECO:0000318"/>
    <property type="project" value="GO_Central"/>
</dbReference>
<dbReference type="GO" id="GO:0032259">
    <property type="term" value="P:methylation"/>
    <property type="evidence" value="ECO:0007669"/>
    <property type="project" value="UniProtKB-KW"/>
</dbReference>
<dbReference type="CDD" id="cd02440">
    <property type="entry name" value="AdoMet_MTases"/>
    <property type="match status" value="1"/>
</dbReference>
<dbReference type="FunFam" id="3.40.50.150:FF:000054">
    <property type="entry name" value="Catechol O-methyltransferase"/>
    <property type="match status" value="1"/>
</dbReference>
<dbReference type="Gene3D" id="3.40.50.150">
    <property type="entry name" value="Vaccinia Virus protein VP39"/>
    <property type="match status" value="1"/>
</dbReference>
<dbReference type="InterPro" id="IPR017128">
    <property type="entry name" value="Catechol_O-MeTrfase_euk"/>
</dbReference>
<dbReference type="InterPro" id="IPR029063">
    <property type="entry name" value="SAM-dependent_MTases_sf"/>
</dbReference>
<dbReference type="InterPro" id="IPR002935">
    <property type="entry name" value="SAM_O-MeTrfase"/>
</dbReference>
<dbReference type="PANTHER" id="PTHR43836:SF3">
    <property type="entry name" value="CATECHOL O-METHYLTRANSFERASE"/>
    <property type="match status" value="1"/>
</dbReference>
<dbReference type="PANTHER" id="PTHR43836">
    <property type="entry name" value="CATECHOL O-METHYLTRANSFERASE 1-RELATED"/>
    <property type="match status" value="1"/>
</dbReference>
<dbReference type="Pfam" id="PF01596">
    <property type="entry name" value="Methyltransf_3"/>
    <property type="match status" value="1"/>
</dbReference>
<dbReference type="PIRSF" id="PIRSF037177">
    <property type="entry name" value="Catechol_O-mtfrase_euk"/>
    <property type="match status" value="1"/>
</dbReference>
<dbReference type="SUPFAM" id="SSF53335">
    <property type="entry name" value="S-adenosyl-L-methionine-dependent methyltransferases"/>
    <property type="match status" value="1"/>
</dbReference>
<dbReference type="PROSITE" id="PS51682">
    <property type="entry name" value="SAM_OMT_I"/>
    <property type="match status" value="1"/>
</dbReference>
<gene>
    <name evidence="9" type="primary">comta</name>
</gene>